<name>PEX26_HUMAN</name>
<comment type="function">
    <text evidence="3 4 5 6 7 9">Peroxisomal docking factor that anchors PEX1 and PEX6 to peroxisome membranes (PubMed:12717447, PubMed:12851857, PubMed:16257970, PubMed:16763195, PubMed:16854980, PubMed:21362118). PEX26 is therefore required for the formation of the PEX1-PEX6 AAA ATPase complex, a complex that mediates the extraction of the PEX5 receptor from peroxisomal membrane (PubMed:12717447, PubMed:12851857, PubMed:16257970, PubMed:16763195, PubMed:16854980, PubMed:21362118).</text>
</comment>
<comment type="subunit">
    <text evidence="3 9">Interacts (via its cytoplasmic domain) with PEX6; interaction is direct and is ATP-dependent (PubMed:12717447, PubMed:21362118). Interacts with PEX1; interaction is indirect and is mediated via interaction with PEX6 (PubMed:12717447).</text>
</comment>
<comment type="interaction">
    <interactant intactId="EBI-752057">
        <id>Q7Z412</id>
    </interactant>
    <interactant intactId="EBI-22011868">
        <id>Q6PCB6</id>
        <label>ABHD17C</label>
    </interactant>
    <organismsDiffer>false</organismsDiffer>
    <experiments>3</experiments>
</comment>
<comment type="interaction">
    <interactant intactId="EBI-752057">
        <id>Q7Z412</id>
    </interactant>
    <interactant intactId="EBI-11529439">
        <id>P63010-2</id>
        <label>AP2B1</label>
    </interactant>
    <organismsDiffer>false</organismsDiffer>
    <experiments>3</experiments>
</comment>
<comment type="interaction">
    <interactant intactId="EBI-752057">
        <id>Q7Z412</id>
    </interactant>
    <interactant intactId="EBI-10186132">
        <id>Q0P5N6</id>
        <label>ARL16</label>
    </interactant>
    <organismsDiffer>false</organismsDiffer>
    <experiments>3</experiments>
</comment>
<comment type="interaction">
    <interactant intactId="EBI-752057">
        <id>Q7Z412</id>
    </interactant>
    <interactant intactId="EBI-10254793">
        <id>Q6XD76</id>
        <label>ASCL4</label>
    </interactant>
    <organismsDiffer>false</organismsDiffer>
    <experiments>3</experiments>
</comment>
<comment type="interaction">
    <interactant intactId="EBI-752057">
        <id>Q7Z412</id>
    </interactant>
    <interactant intactId="EBI-9091996">
        <id>Q9UQB8-3</id>
        <label>BAIAP2</label>
    </interactant>
    <organismsDiffer>false</organismsDiffer>
    <experiments>3</experiments>
</comment>
<comment type="interaction">
    <interactant intactId="EBI-752057">
        <id>Q7Z412</id>
    </interactant>
    <interactant intactId="EBI-752084">
        <id>Q9BUW7</id>
        <label>BBLN</label>
    </interactant>
    <organismsDiffer>false</organismsDiffer>
    <experiments>3</experiments>
</comment>
<comment type="interaction">
    <interactant intactId="EBI-752057">
        <id>Q7Z412</id>
    </interactant>
    <interactant intactId="EBI-518823">
        <id>O15392</id>
        <label>BIRC5</label>
    </interactant>
    <organismsDiffer>false</organismsDiffer>
    <experiments>3</experiments>
</comment>
<comment type="interaction">
    <interactant intactId="EBI-752057">
        <id>Q7Z412</id>
    </interactant>
    <interactant intactId="EBI-3919268">
        <id>Q96LC9</id>
        <label>BMF</label>
    </interactant>
    <organismsDiffer>false</organismsDiffer>
    <experiments>3</experiments>
</comment>
<comment type="interaction">
    <interactant intactId="EBI-752057">
        <id>Q7Z412</id>
    </interactant>
    <interactant intactId="EBI-350590">
        <id>Q9UNS2</id>
        <label>COPS3</label>
    </interactant>
    <organismsDiffer>false</organismsDiffer>
    <experiments>3</experiments>
</comment>
<comment type="interaction">
    <interactant intactId="EBI-752057">
        <id>Q7Z412</id>
    </interactant>
    <interactant intactId="EBI-77321">
        <id>Q9UER7</id>
        <label>DAXX</label>
    </interactant>
    <organismsDiffer>false</organismsDiffer>
    <experiments>3</experiments>
</comment>
<comment type="interaction">
    <interactant intactId="EBI-752057">
        <id>Q7Z412</id>
    </interactant>
    <interactant intactId="EBI-7779316">
        <id>A0AVK6</id>
        <label>E2F8</label>
    </interactant>
    <organismsDiffer>false</organismsDiffer>
    <experiments>3</experiments>
</comment>
<comment type="interaction">
    <interactant intactId="EBI-752057">
        <id>Q7Z412</id>
    </interactant>
    <interactant intactId="EBI-21900888">
        <id>Q5JUQ0</id>
        <label>FAM78A</label>
    </interactant>
    <organismsDiffer>false</organismsDiffer>
    <experiments>3</experiments>
</comment>
<comment type="interaction">
    <interactant intactId="EBI-752057">
        <id>Q7Z412</id>
    </interactant>
    <interactant intactId="EBI-10253815">
        <id>Q6PIV2</id>
        <label>FOXR1</label>
    </interactant>
    <organismsDiffer>false</organismsDiffer>
    <experiments>3</experiments>
</comment>
<comment type="interaction">
    <interactant intactId="EBI-752057">
        <id>Q7Z412</id>
    </interactant>
    <interactant intactId="EBI-301762">
        <id>Q969S8</id>
        <label>HDAC10</label>
    </interactant>
    <organismsDiffer>false</organismsDiffer>
    <experiments>3</experiments>
</comment>
<comment type="interaction">
    <interactant intactId="EBI-752057">
        <id>Q7Z412</id>
    </interactant>
    <interactant intactId="EBI-21911304">
        <id>Q6DN90-2</id>
        <label>IQSEC1</label>
    </interactant>
    <organismsDiffer>false</organismsDiffer>
    <experiments>3</experiments>
</comment>
<comment type="interaction">
    <interactant intactId="EBI-752057">
        <id>Q7Z412</id>
    </interactant>
    <interactant intactId="EBI-12382297">
        <id>Q96SI1-2</id>
        <label>KCTD15</label>
    </interactant>
    <organismsDiffer>false</organismsDiffer>
    <experiments>3</experiments>
</comment>
<comment type="interaction">
    <interactant intactId="EBI-752057">
        <id>Q7Z412</id>
    </interactant>
    <interactant intactId="EBI-1643885">
        <id>Q6P597</id>
        <label>KLC3</label>
    </interactant>
    <organismsDiffer>false</organismsDiffer>
    <experiments>3</experiments>
</comment>
<comment type="interaction">
    <interactant intactId="EBI-752057">
        <id>Q7Z412</id>
    </interactant>
    <interactant intactId="EBI-12811111">
        <id>Q8IUB9</id>
        <label>KRTAP19-1</label>
    </interactant>
    <organismsDiffer>false</organismsDiffer>
    <experiments>3</experiments>
</comment>
<comment type="interaction">
    <interactant intactId="EBI-752057">
        <id>Q7Z412</id>
    </interactant>
    <interactant intactId="EBI-10261141">
        <id>Q8IUC2</id>
        <label>KRTAP8-1</label>
    </interactant>
    <organismsDiffer>false</organismsDiffer>
    <experiments>3</experiments>
</comment>
<comment type="interaction">
    <interactant intactId="EBI-752057">
        <id>Q7Z412</id>
    </interactant>
    <interactant intactId="EBI-25835523">
        <id>Q9H2C1</id>
        <label>LHX5</label>
    </interactant>
    <organismsDiffer>false</organismsDiffer>
    <experiments>3</experiments>
</comment>
<comment type="interaction">
    <interactant intactId="EBI-752057">
        <id>Q7Z412</id>
    </interactant>
    <interactant intactId="EBI-25831954">
        <id>Q6ZP95</id>
        <label>LOC642947</label>
    </interactant>
    <organismsDiffer>false</organismsDiffer>
    <experiments>3</experiments>
</comment>
<comment type="interaction">
    <interactant intactId="EBI-752057">
        <id>Q7Z412</id>
    </interactant>
    <interactant intactId="EBI-2864512">
        <id>P50221</id>
        <label>MEOX1</label>
    </interactant>
    <organismsDiffer>false</organismsDiffer>
    <experiments>3</experiments>
</comment>
<comment type="interaction">
    <interactant intactId="EBI-752057">
        <id>Q7Z412</id>
    </interactant>
    <interactant intactId="EBI-21250407">
        <id>A4FUJ8</id>
        <label>MKL1</label>
    </interactant>
    <organismsDiffer>false</organismsDiffer>
    <experiments>3</experiments>
</comment>
<comment type="interaction">
    <interactant intactId="EBI-752057">
        <id>Q7Z412</id>
    </interactant>
    <interactant intactId="EBI-2340269">
        <id>Q13064</id>
        <label>MKRN3</label>
    </interactant>
    <organismsDiffer>false</organismsDiffer>
    <experiments>3</experiments>
</comment>
<comment type="interaction">
    <interactant intactId="EBI-752057">
        <id>Q7Z412</id>
    </interactant>
    <interactant intactId="EBI-9092052">
        <id>Q9Y3D2</id>
        <label>MSRB2</label>
    </interactant>
    <organismsDiffer>false</organismsDiffer>
    <experiments>3</experiments>
</comment>
<comment type="interaction">
    <interactant intactId="EBI-752057">
        <id>Q7Z412</id>
    </interactant>
    <interactant intactId="EBI-2880203">
        <id>O76041</id>
        <label>NEBL</label>
    </interactant>
    <organismsDiffer>false</organismsDiffer>
    <experiments>3</experiments>
</comment>
<comment type="interaction">
    <interactant intactId="EBI-752057">
        <id>Q7Z412</id>
    </interactant>
    <interactant intactId="EBI-594747">
        <id>P40855</id>
        <label>PEX19</label>
    </interactant>
    <organismsDiffer>false</organismsDiffer>
    <experiments>9</experiments>
</comment>
<comment type="interaction">
    <interactant intactId="EBI-752057">
        <id>Q7Z412</id>
    </interactant>
    <interactant intactId="EBI-357275">
        <id>Q99471</id>
        <label>PFDN5</label>
    </interactant>
    <organismsDiffer>false</organismsDiffer>
    <experiments>3</experiments>
</comment>
<comment type="interaction">
    <interactant intactId="EBI-752057">
        <id>Q7Z412</id>
    </interactant>
    <interactant intactId="EBI-25829984">
        <id>Q9ULX5</id>
        <label>RNF112</label>
    </interactant>
    <organismsDiffer>false</organismsDiffer>
    <experiments>3</experiments>
</comment>
<comment type="interaction">
    <interactant intactId="EBI-752057">
        <id>Q7Z412</id>
    </interactant>
    <interactant intactId="EBI-1570153">
        <id>Q6UVJ0</id>
        <label>SASS6</label>
    </interactant>
    <organismsDiffer>false</organismsDiffer>
    <experiments>3</experiments>
</comment>
<comment type="interaction">
    <interactant intactId="EBI-752057">
        <id>Q7Z412</id>
    </interactant>
    <interactant intactId="EBI-358545">
        <id>Q9GZS3</id>
        <label>SKIC8</label>
    </interactant>
    <organismsDiffer>false</organismsDiffer>
    <experiments>3</experiments>
</comment>
<comment type="interaction">
    <interactant intactId="EBI-752057">
        <id>Q7Z412</id>
    </interactant>
    <interactant intactId="EBI-740595">
        <id>Q9UMX1</id>
        <label>SUFU</label>
    </interactant>
    <organismsDiffer>false</organismsDiffer>
    <experiments>2</experiments>
</comment>
<comment type="interaction">
    <interactant intactId="EBI-752057">
        <id>Q7Z412</id>
    </interactant>
    <interactant intactId="EBI-366083">
        <id>P04637</id>
        <label>TP53</label>
    </interactant>
    <organismsDiffer>false</organismsDiffer>
    <experiments>3</experiments>
</comment>
<comment type="interaction">
    <interactant intactId="EBI-752057">
        <id>Q7Z412</id>
    </interactant>
    <interactant intactId="EBI-2682299">
        <id>Q96NC0</id>
        <label>ZMAT2</label>
    </interactant>
    <organismsDiffer>false</organismsDiffer>
    <experiments>3</experiments>
</comment>
<comment type="interaction">
    <interactant intactId="EBI-752057">
        <id>Q7Z412</id>
    </interactant>
    <interactant intactId="EBI-723434">
        <id>Q5JTY5</id>
        <label>ZNG1C</label>
    </interactant>
    <organismsDiffer>false</organismsDiffer>
    <experiments>3</experiments>
</comment>
<comment type="interaction">
    <interactant intactId="EBI-752057">
        <id>Q7Z412</id>
    </interactant>
    <interactant intactId="EBI-9088990">
        <id>Q7Z783</id>
    </interactant>
    <organismsDiffer>false</organismsDiffer>
    <experiments>3</experiments>
</comment>
<comment type="subcellular location">
    <subcellularLocation>
        <location evidence="3 5">Peroxisome membrane</location>
        <topology evidence="3">Single-pass type II membrane protein</topology>
    </subcellularLocation>
</comment>
<comment type="alternative products">
    <event type="alternative splicing"/>
    <isoform>
        <id>Q7Z412-1</id>
        <name>1</name>
        <sequence type="displayed"/>
    </isoform>
    <isoform>
        <id>Q7Z412-2</id>
        <name>2</name>
        <sequence type="described" ref="VSP_053499"/>
    </isoform>
</comment>
<comment type="tissue specificity">
    <text evidence="4">Widely expressed (PubMed:12851857). Highly expressed in kidney, liver, brain and skeletal muscles (PubMed:12851857). Expressed at intermediate level in pancreas, placenta and heart (PubMed:12851857). Weakly expressed in lung (PubMed:12851857).</text>
</comment>
<comment type="disease" evidence="3 4 5 8">
    <disease id="DI-00918">
        <name>Peroxisome biogenesis disorder complementation group 8</name>
        <acronym>PBD-CG8</acronym>
        <description>A peroxisomal disorder arising from a failure of protein import into the peroxisomal membrane or matrix. The peroxisome biogenesis disorders (PBD group) are genetically heterogeneous with at least 14 distinct genetic groups as concluded from complementation studies. Include disorders are: Zellweger syndrome (ZWS), neonatal adrenoleukodystrophy (NALD), infantile Refsum disease (IRD), and classical rhizomelic chondrodysplasia punctata (RCDP). ZWS, NALD and IRD are distinct from RCDP and constitute a clinical continuum of overlapping phenotypes known as the Zellweger spectrum (PBD-ZSS).</description>
        <dbReference type="MIM" id="614872"/>
    </disease>
    <text>The disease is caused by variants affecting the gene represented in this entry.</text>
</comment>
<comment type="disease" evidence="4 10">
    <disease id="DI-03587">
        <name>Peroxisome biogenesis disorder 7A</name>
        <acronym>PBD7A</acronym>
        <description>A fatal peroxisome biogenesis disorder belonging to the Zellweger disease spectrum and clinically characterized by severe neurologic dysfunction with profound psychomotor retardation, severe hypotonia and neonatal seizures, craniofacial abnormalities, liver dysfunction, and biochemically by the absence of peroxisomes. Additional features include cardiovascular and skeletal defects, renal cysts, ocular abnormalities, and hearing impairment. Most severely affected individuals with the classic form of the disease (classic Zellweger syndrome) die within the first year of life.</description>
        <dbReference type="MIM" id="614872"/>
    </disease>
    <text>The disease is caused by variants affecting the gene represented in this entry.</text>
</comment>
<comment type="disease" evidence="3 4">
    <disease id="DI-03588">
        <name>Peroxisome biogenesis disorder 7B</name>
        <acronym>PBD7B</acronym>
        <description>A peroxisome biogenesis disorder that includes neonatal adrenoleukodystrophy (NALD) and infantile Refsum disease (IRD), two milder manifestations of the Zellweger disease spectrum. The clinical course of patients with the NALD and IRD presentation is variable and may include developmental delay, hypotonia, liver dysfunction, sensorineural hearing loss, retinal dystrophy and vision impairment. Children with the NALD presentation may reach their teens, while patients with the IRD presentation may reach adulthood. The clinical conditions are often slowly progressive in particular with respect to loss of hearing and vision. The biochemical abnormalities include accumulation of phytanic acid, very long chain fatty acids (VLCFA), di- and trihydroxycholestanoic acid and pipecolic acid.</description>
        <dbReference type="MIM" id="614873"/>
    </disease>
    <text>The disease is caused by variants affecting the gene represented in this entry.</text>
</comment>
<comment type="similarity">
    <text evidence="13">Belongs to the peroxin-26 family.</text>
</comment>
<comment type="sequence caution" evidence="13">
    <conflict type="erroneous termination">
        <sequence resource="EMBL-CDS" id="BAA90920"/>
    </conflict>
    <text>Truncated C-terminus.</text>
</comment>
<comment type="online information" name="dbPEX, PEX Gene Database">
    <link uri="https://databases.lovd.nl/shared/genes/PEX26"/>
</comment>
<sequence length="305" mass="33898">MKSDSSTSAAPLRGLGGPLRSSEPVRAVPARAPAVDLLEEAADLLVVHLDFRAALETCERAWQSLANHAVAEEPAGTSLEVKCSLCVVGIQALAEMDRWQEVLSWVLQYYQVPEKLPPKVLELCILLYSKMQEPGAVLDVVGAWLQDPANQNLPEYGALAEFHVQRVLLPLGCLSEAEELVVGSAAFGEERRLDVLQAIHTARQQQKQEHSGSEEAQKPNLEGSVSHKFLSLPMLVRQLWDSAVSHFFSLPFKKSLLAALILCLLVVRFDPASPSSLHFLYKLAQLFRWIRKAAFSRLYQLRIRD</sequence>
<feature type="chain" id="PRO_0000058340" description="Peroxisome assembly protein 26">
    <location>
        <begin position="1"/>
        <end position="305"/>
    </location>
</feature>
<feature type="topological domain" description="Cytoplasmic" evidence="14">
    <location>
        <begin position="1"/>
        <end position="246"/>
    </location>
</feature>
<feature type="transmembrane region" description="Helical; Signal-anchor for type II membrane protein" evidence="1">
    <location>
        <begin position="247"/>
        <end position="267"/>
    </location>
</feature>
<feature type="topological domain" description="Peroxisomal matrix" evidence="14">
    <location>
        <begin position="268"/>
        <end position="305"/>
    </location>
</feature>
<feature type="region of interest" description="Disordered" evidence="2">
    <location>
        <begin position="1"/>
        <end position="20"/>
    </location>
</feature>
<feature type="splice variant" id="VSP_053499" description="In isoform 2." evidence="11">
    <location>
        <begin position="223"/>
        <end position="271"/>
    </location>
</feature>
<feature type="sequence variant" id="VAR_087137" description="In PBD-CG8; impaired protein import into peroxisome; decreased interaction with PEX6; does not affect localization to peroxisomal membrane." evidence="5">
    <original>L</original>
    <variation>P</variation>
    <location>
        <position position="44"/>
    </location>
</feature>
<feature type="sequence variant" id="VAR_018647" description="In PBD7B; infantile Refsum disease; dbSNP:rs61752132." evidence="4">
    <original>L</original>
    <variation>P</variation>
    <location>
        <position position="45"/>
    </location>
</feature>
<feature type="sequence variant" id="VAR_018648" description="In PBD7A; dbSNP:rs28940308." evidence="4">
    <original>G</original>
    <variation>R</variation>
    <location>
        <position position="89"/>
    </location>
</feature>
<feature type="sequence variant" id="VAR_018649" description="In PBD7B and PBD-CG8; neonatal adrenoleukodystrophy; impaired protein import into peroxisome; affects the interaction with PEX6; dbSNP:rs62641228." evidence="3 4 5 8">
    <original>R</original>
    <variation>W</variation>
    <location>
        <position position="98"/>
    </location>
</feature>
<feature type="sequence variant" id="VAR_087138" description="In PBD7A." evidence="10">
    <original>L</original>
    <variation>Q</variation>
    <location>
        <position position="116"/>
    </location>
</feature>
<feature type="sequence variant" id="VAR_087139" description="In PBD-CG8; impaired protein import into peroxisome; decreased interaction with PEX6; does not affect localization to peroxisomal membrane." evidence="5">
    <original>P</original>
    <variation>L</variation>
    <location>
        <position position="117"/>
    </location>
</feature>
<feature type="sequence variant" id="VAR_034146" description="In dbSNP:rs12484657." evidence="8">
    <original>L</original>
    <variation>V</variation>
    <location>
        <position position="153"/>
    </location>
</feature>
<feature type="sequence conflict" description="In Ref. 6; AAH16280." evidence="13" ref="6">
    <original>R</original>
    <variation>H</variation>
    <location>
        <position position="304"/>
    </location>
</feature>
<accession>Q7Z412</accession>
<accession>F6UBB5</accession>
<accession>Q7Z413</accession>
<accession>Q7Z414</accession>
<accession>Q7Z415</accession>
<accession>Q7Z416</accession>
<accession>Q96B12</accession>
<accession>Q9NWQ0</accession>
<accession>Q9NXU0</accession>
<proteinExistence type="evidence at protein level"/>
<evidence type="ECO:0000255" key="1"/>
<evidence type="ECO:0000256" key="2">
    <source>
        <dbReference type="SAM" id="MobiDB-lite"/>
    </source>
</evidence>
<evidence type="ECO:0000269" key="3">
    <source>
    </source>
</evidence>
<evidence type="ECO:0000269" key="4">
    <source>
    </source>
</evidence>
<evidence type="ECO:0000269" key="5">
    <source>
    </source>
</evidence>
<evidence type="ECO:0000269" key="6">
    <source>
    </source>
</evidence>
<evidence type="ECO:0000269" key="7">
    <source>
    </source>
</evidence>
<evidence type="ECO:0000269" key="8">
    <source>
    </source>
</evidence>
<evidence type="ECO:0000269" key="9">
    <source>
    </source>
</evidence>
<evidence type="ECO:0000269" key="10">
    <source>
    </source>
</evidence>
<evidence type="ECO:0000303" key="11">
    <source>
    </source>
</evidence>
<evidence type="ECO:0000303" key="12">
    <source>
    </source>
</evidence>
<evidence type="ECO:0000305" key="13"/>
<evidence type="ECO:0000305" key="14">
    <source>
    </source>
</evidence>
<evidence type="ECO:0000312" key="15">
    <source>
        <dbReference type="HGNC" id="HGNC:22965"/>
    </source>
</evidence>
<protein>
    <recommendedName>
        <fullName evidence="13">Peroxisome assembly protein 26</fullName>
    </recommendedName>
    <alternativeName>
        <fullName evidence="13">Peroxin-26</fullName>
    </alternativeName>
</protein>
<keyword id="KW-0025">Alternative splicing</keyword>
<keyword id="KW-0225">Disease variant</keyword>
<keyword id="KW-0472">Membrane</keyword>
<keyword id="KW-0576">Peroxisome</keyword>
<keyword id="KW-0958">Peroxisome biogenesis disorder</keyword>
<keyword id="KW-0653">Protein transport</keyword>
<keyword id="KW-1267">Proteomics identification</keyword>
<keyword id="KW-1185">Reference proteome</keyword>
<keyword id="KW-0735">Signal-anchor</keyword>
<keyword id="KW-0812">Transmembrane</keyword>
<keyword id="KW-1133">Transmembrane helix</keyword>
<keyword id="KW-0813">Transport</keyword>
<keyword id="KW-0861">Zellweger syndrome</keyword>
<reference key="1">
    <citation type="journal article" date="2003" name="Nat. Cell Biol.">
        <title>The pathogenic peroxin Pex26p recruits the Pex1p-Pex6p AAA ATPase complexes to peroxisomes.</title>
        <authorList>
            <person name="Matsumoto N."/>
            <person name="Tamura S."/>
            <person name="Fujiki Y."/>
        </authorList>
    </citation>
    <scope>NUCLEOTIDE SEQUENCE [MRNA] (ISOFORM 1)</scope>
    <scope>FUNCTION</scope>
    <scope>SUBCELLULAR LOCATION</scope>
    <scope>TOPOLOGY</scope>
    <scope>INVOLVEMENT IN PBD-CG8</scope>
    <scope>INTERACTION WITH PEX1 AND PEX6</scope>
    <scope>VARIANT PBD7B TRP-98</scope>
    <source>
        <tissue>Fibroblast</tissue>
    </source>
</reference>
<reference key="2">
    <citation type="journal article" date="2003" name="Am. J. Hum. Genet.">
        <title>Mutations in novel peroxin gene PEX26 that cause peroxisome-biogenesis disorders of complementation group 8 provide a genotype-phenotype correlation.</title>
        <authorList>
            <person name="Matsumoto N."/>
            <person name="Tamura S."/>
            <person name="Furuki S."/>
            <person name="Miyata N."/>
            <person name="Moser A."/>
            <person name="Shimozawa N."/>
            <person name="Moser H.W."/>
            <person name="Suzuki Y."/>
            <person name="Kondo N."/>
            <person name="Fujiki Y."/>
        </authorList>
    </citation>
    <scope>NUCLEOTIDE SEQUENCE [MRNA] (ISOFORM 1)</scope>
    <scope>FUNCTION</scope>
    <scope>TISSUE SPECIFICITY</scope>
    <scope>INVOLVEMENT IN PBD-CG8</scope>
    <scope>VARIANT PBD7A ARG-89</scope>
    <scope>VARIANTS PBD7B PRO-45 AND TRP-98</scope>
</reference>
<reference key="3">
    <citation type="journal article" date="2004" name="Nat. Genet.">
        <title>Complete sequencing and characterization of 21,243 full-length human cDNAs.</title>
        <authorList>
            <person name="Ota T."/>
            <person name="Suzuki Y."/>
            <person name="Nishikawa T."/>
            <person name="Otsuki T."/>
            <person name="Sugiyama T."/>
            <person name="Irie R."/>
            <person name="Wakamatsu A."/>
            <person name="Hayashi K."/>
            <person name="Sato H."/>
            <person name="Nagai K."/>
            <person name="Kimura K."/>
            <person name="Makita H."/>
            <person name="Sekine M."/>
            <person name="Obayashi M."/>
            <person name="Nishi T."/>
            <person name="Shibahara T."/>
            <person name="Tanaka T."/>
            <person name="Ishii S."/>
            <person name="Yamamoto J."/>
            <person name="Saito K."/>
            <person name="Kawai Y."/>
            <person name="Isono Y."/>
            <person name="Nakamura Y."/>
            <person name="Nagahari K."/>
            <person name="Murakami K."/>
            <person name="Yasuda T."/>
            <person name="Iwayanagi T."/>
            <person name="Wagatsuma M."/>
            <person name="Shiratori A."/>
            <person name="Sudo H."/>
            <person name="Hosoiri T."/>
            <person name="Kaku Y."/>
            <person name="Kodaira H."/>
            <person name="Kondo H."/>
            <person name="Sugawara M."/>
            <person name="Takahashi M."/>
            <person name="Kanda K."/>
            <person name="Yokoi T."/>
            <person name="Furuya T."/>
            <person name="Kikkawa E."/>
            <person name="Omura Y."/>
            <person name="Abe K."/>
            <person name="Kamihara K."/>
            <person name="Katsuta N."/>
            <person name="Sato K."/>
            <person name="Tanikawa M."/>
            <person name="Yamazaki M."/>
            <person name="Ninomiya K."/>
            <person name="Ishibashi T."/>
            <person name="Yamashita H."/>
            <person name="Murakawa K."/>
            <person name="Fujimori K."/>
            <person name="Tanai H."/>
            <person name="Kimata M."/>
            <person name="Watanabe M."/>
            <person name="Hiraoka S."/>
            <person name="Chiba Y."/>
            <person name="Ishida S."/>
            <person name="Ono Y."/>
            <person name="Takiguchi S."/>
            <person name="Watanabe S."/>
            <person name="Yosida M."/>
            <person name="Hotuta T."/>
            <person name="Kusano J."/>
            <person name="Kanehori K."/>
            <person name="Takahashi-Fujii A."/>
            <person name="Hara H."/>
            <person name="Tanase T.-O."/>
            <person name="Nomura Y."/>
            <person name="Togiya S."/>
            <person name="Komai F."/>
            <person name="Hara R."/>
            <person name="Takeuchi K."/>
            <person name="Arita M."/>
            <person name="Imose N."/>
            <person name="Musashino K."/>
            <person name="Yuuki H."/>
            <person name="Oshima A."/>
            <person name="Sasaki N."/>
            <person name="Aotsuka S."/>
            <person name="Yoshikawa Y."/>
            <person name="Matsunawa H."/>
            <person name="Ichihara T."/>
            <person name="Shiohata N."/>
            <person name="Sano S."/>
            <person name="Moriya S."/>
            <person name="Momiyama H."/>
            <person name="Satoh N."/>
            <person name="Takami S."/>
            <person name="Terashima Y."/>
            <person name="Suzuki O."/>
            <person name="Nakagawa S."/>
            <person name="Senoh A."/>
            <person name="Mizoguchi H."/>
            <person name="Goto Y."/>
            <person name="Shimizu F."/>
            <person name="Wakebe H."/>
            <person name="Hishigaki H."/>
            <person name="Watanabe T."/>
            <person name="Sugiyama A."/>
            <person name="Takemoto M."/>
            <person name="Kawakami B."/>
            <person name="Yamazaki M."/>
            <person name="Watanabe K."/>
            <person name="Kumagai A."/>
            <person name="Itakura S."/>
            <person name="Fukuzumi Y."/>
            <person name="Fujimori Y."/>
            <person name="Komiyama M."/>
            <person name="Tashiro H."/>
            <person name="Tanigami A."/>
            <person name="Fujiwara T."/>
            <person name="Ono T."/>
            <person name="Yamada K."/>
            <person name="Fujii Y."/>
            <person name="Ozaki K."/>
            <person name="Hirao M."/>
            <person name="Ohmori Y."/>
            <person name="Kawabata A."/>
            <person name="Hikiji T."/>
            <person name="Kobatake N."/>
            <person name="Inagaki H."/>
            <person name="Ikema Y."/>
            <person name="Okamoto S."/>
            <person name="Okitani R."/>
            <person name="Kawakami T."/>
            <person name="Noguchi S."/>
            <person name="Itoh T."/>
            <person name="Shigeta K."/>
            <person name="Senba T."/>
            <person name="Matsumura K."/>
            <person name="Nakajima Y."/>
            <person name="Mizuno T."/>
            <person name="Morinaga M."/>
            <person name="Sasaki M."/>
            <person name="Togashi T."/>
            <person name="Oyama M."/>
            <person name="Hata H."/>
            <person name="Watanabe M."/>
            <person name="Komatsu T."/>
            <person name="Mizushima-Sugano J."/>
            <person name="Satoh T."/>
            <person name="Shirai Y."/>
            <person name="Takahashi Y."/>
            <person name="Nakagawa K."/>
            <person name="Okumura K."/>
            <person name="Nagase T."/>
            <person name="Nomura N."/>
            <person name="Kikuchi H."/>
            <person name="Masuho Y."/>
            <person name="Yamashita R."/>
            <person name="Nakai K."/>
            <person name="Yada T."/>
            <person name="Nakamura Y."/>
            <person name="Ohara O."/>
            <person name="Isogai T."/>
            <person name="Sugano S."/>
        </authorList>
    </citation>
    <scope>NUCLEOTIDE SEQUENCE [LARGE SCALE MRNA] (ISOFORM 1)</scope>
    <source>
        <tissue>Colon</tissue>
        <tissue>Ileal mucosa</tissue>
    </source>
</reference>
<reference key="4">
    <citation type="journal article" date="2004" name="Genome Biol.">
        <title>A genome annotation-driven approach to cloning the human ORFeome.</title>
        <authorList>
            <person name="Collins J.E."/>
            <person name="Wright C.L."/>
            <person name="Edwards C.A."/>
            <person name="Davis M.P."/>
            <person name="Grinham J.A."/>
            <person name="Cole C.G."/>
            <person name="Goward M.E."/>
            <person name="Aguado B."/>
            <person name="Mallya M."/>
            <person name="Mokrab Y."/>
            <person name="Huckle E.J."/>
            <person name="Beare D.M."/>
            <person name="Dunham I."/>
        </authorList>
    </citation>
    <scope>NUCLEOTIDE SEQUENCE [LARGE SCALE MRNA] (ISOFORM 1)</scope>
</reference>
<reference key="5">
    <citation type="journal article" date="1999" name="Nature">
        <title>The DNA sequence of human chromosome 22.</title>
        <authorList>
            <person name="Dunham I."/>
            <person name="Hunt A.R."/>
            <person name="Collins J.E."/>
            <person name="Bruskiewich R."/>
            <person name="Beare D.M."/>
            <person name="Clamp M."/>
            <person name="Smink L.J."/>
            <person name="Ainscough R."/>
            <person name="Almeida J.P."/>
            <person name="Babbage A.K."/>
            <person name="Bagguley C."/>
            <person name="Bailey J."/>
            <person name="Barlow K.F."/>
            <person name="Bates K.N."/>
            <person name="Beasley O.P."/>
            <person name="Bird C.P."/>
            <person name="Blakey S.E."/>
            <person name="Bridgeman A.M."/>
            <person name="Buck D."/>
            <person name="Burgess J."/>
            <person name="Burrill W.D."/>
            <person name="Burton J."/>
            <person name="Carder C."/>
            <person name="Carter N.P."/>
            <person name="Chen Y."/>
            <person name="Clark G."/>
            <person name="Clegg S.M."/>
            <person name="Cobley V.E."/>
            <person name="Cole C.G."/>
            <person name="Collier R.E."/>
            <person name="Connor R."/>
            <person name="Conroy D."/>
            <person name="Corby N.R."/>
            <person name="Coville G.J."/>
            <person name="Cox A.V."/>
            <person name="Davis J."/>
            <person name="Dawson E."/>
            <person name="Dhami P.D."/>
            <person name="Dockree C."/>
            <person name="Dodsworth S.J."/>
            <person name="Durbin R.M."/>
            <person name="Ellington A.G."/>
            <person name="Evans K.L."/>
            <person name="Fey J.M."/>
            <person name="Fleming K."/>
            <person name="French L."/>
            <person name="Garner A.A."/>
            <person name="Gilbert J.G.R."/>
            <person name="Goward M.E."/>
            <person name="Grafham D.V."/>
            <person name="Griffiths M.N.D."/>
            <person name="Hall C."/>
            <person name="Hall R.E."/>
            <person name="Hall-Tamlyn G."/>
            <person name="Heathcott R.W."/>
            <person name="Ho S."/>
            <person name="Holmes S."/>
            <person name="Hunt S.E."/>
            <person name="Jones M.C."/>
            <person name="Kershaw J."/>
            <person name="Kimberley A.M."/>
            <person name="King A."/>
            <person name="Laird G.K."/>
            <person name="Langford C.F."/>
            <person name="Leversha M.A."/>
            <person name="Lloyd C."/>
            <person name="Lloyd D.M."/>
            <person name="Martyn I.D."/>
            <person name="Mashreghi-Mohammadi M."/>
            <person name="Matthews L.H."/>
            <person name="Mccann O.T."/>
            <person name="Mcclay J."/>
            <person name="Mclaren S."/>
            <person name="McMurray A.A."/>
            <person name="Milne S.A."/>
            <person name="Mortimore B.J."/>
            <person name="Odell C.N."/>
            <person name="Pavitt R."/>
            <person name="Pearce A.V."/>
            <person name="Pearson D."/>
            <person name="Phillimore B.J.C.T."/>
            <person name="Phillips S.H."/>
            <person name="Plumb R.W."/>
            <person name="Ramsay H."/>
            <person name="Ramsey Y."/>
            <person name="Rogers L."/>
            <person name="Ross M.T."/>
            <person name="Scott C.E."/>
            <person name="Sehra H.K."/>
            <person name="Skuce C.D."/>
            <person name="Smalley S."/>
            <person name="Smith M.L."/>
            <person name="Soderlund C."/>
            <person name="Spragon L."/>
            <person name="Steward C.A."/>
            <person name="Sulston J.E."/>
            <person name="Swann R.M."/>
            <person name="Vaudin M."/>
            <person name="Wall M."/>
            <person name="Wallis J.M."/>
            <person name="Whiteley M.N."/>
            <person name="Willey D.L."/>
            <person name="Williams L."/>
            <person name="Williams S.A."/>
            <person name="Williamson H."/>
            <person name="Wilmer T.E."/>
            <person name="Wilming L."/>
            <person name="Wright C.L."/>
            <person name="Hubbard T."/>
            <person name="Bentley D.R."/>
            <person name="Beck S."/>
            <person name="Rogers J."/>
            <person name="Shimizu N."/>
            <person name="Minoshima S."/>
            <person name="Kawasaki K."/>
            <person name="Sasaki T."/>
            <person name="Asakawa S."/>
            <person name="Kudoh J."/>
            <person name="Shintani A."/>
            <person name="Shibuya K."/>
            <person name="Yoshizaki Y."/>
            <person name="Aoki N."/>
            <person name="Mitsuyama S."/>
            <person name="Roe B.A."/>
            <person name="Chen F."/>
            <person name="Chu L."/>
            <person name="Crabtree J."/>
            <person name="Deschamps S."/>
            <person name="Do A."/>
            <person name="Do T."/>
            <person name="Dorman A."/>
            <person name="Fang F."/>
            <person name="Fu Y."/>
            <person name="Hu P."/>
            <person name="Hua A."/>
            <person name="Kenton S."/>
            <person name="Lai H."/>
            <person name="Lao H.I."/>
            <person name="Lewis J."/>
            <person name="Lewis S."/>
            <person name="Lin S.-P."/>
            <person name="Loh P."/>
            <person name="Malaj E."/>
            <person name="Nguyen T."/>
            <person name="Pan H."/>
            <person name="Phan S."/>
            <person name="Qi S."/>
            <person name="Qian Y."/>
            <person name="Ray L."/>
            <person name="Ren Q."/>
            <person name="Shaull S."/>
            <person name="Sloan D."/>
            <person name="Song L."/>
            <person name="Wang Q."/>
            <person name="Wang Y."/>
            <person name="Wang Z."/>
            <person name="White J."/>
            <person name="Willingham D."/>
            <person name="Wu H."/>
            <person name="Yao Z."/>
            <person name="Zhan M."/>
            <person name="Zhang G."/>
            <person name="Chissoe S."/>
            <person name="Murray J."/>
            <person name="Miller N."/>
            <person name="Minx P."/>
            <person name="Fulton R."/>
            <person name="Johnson D."/>
            <person name="Bemis G."/>
            <person name="Bentley D."/>
            <person name="Bradshaw H."/>
            <person name="Bourne S."/>
            <person name="Cordes M."/>
            <person name="Du Z."/>
            <person name="Fulton L."/>
            <person name="Goela D."/>
            <person name="Graves T."/>
            <person name="Hawkins J."/>
            <person name="Hinds K."/>
            <person name="Kemp K."/>
            <person name="Latreille P."/>
            <person name="Layman D."/>
            <person name="Ozersky P."/>
            <person name="Rohlfing T."/>
            <person name="Scheet P."/>
            <person name="Walker C."/>
            <person name="Wamsley A."/>
            <person name="Wohldmann P."/>
            <person name="Pepin K."/>
            <person name="Nelson J."/>
            <person name="Korf I."/>
            <person name="Bedell J.A."/>
            <person name="Hillier L.W."/>
            <person name="Mardis E."/>
            <person name="Waterston R."/>
            <person name="Wilson R."/>
            <person name="Emanuel B.S."/>
            <person name="Shaikh T."/>
            <person name="Kurahashi H."/>
            <person name="Saitta S."/>
            <person name="Budarf M.L."/>
            <person name="McDermid H.E."/>
            <person name="Johnson A."/>
            <person name="Wong A.C.C."/>
            <person name="Morrow B.E."/>
            <person name="Edelmann L."/>
            <person name="Kim U.J."/>
            <person name="Shizuya H."/>
            <person name="Simon M.I."/>
            <person name="Dumanski J.P."/>
            <person name="Peyrard M."/>
            <person name="Kedra D."/>
            <person name="Seroussi E."/>
            <person name="Fransson I."/>
            <person name="Tapia I."/>
            <person name="Bruder C.E."/>
            <person name="O'Brien K.P."/>
            <person name="Wilkinson P."/>
            <person name="Bodenteich A."/>
            <person name="Hartman K."/>
            <person name="Hu X."/>
            <person name="Khan A.S."/>
            <person name="Lane L."/>
            <person name="Tilahun Y."/>
            <person name="Wright H."/>
        </authorList>
    </citation>
    <scope>NUCLEOTIDE SEQUENCE [LARGE SCALE GENOMIC DNA]</scope>
</reference>
<reference key="6">
    <citation type="journal article" date="2004" name="Genome Res.">
        <title>The status, quality, and expansion of the NIH full-length cDNA project: the Mammalian Gene Collection (MGC).</title>
        <authorList>
            <consortium name="The MGC Project Team"/>
        </authorList>
    </citation>
    <scope>NUCLEOTIDE SEQUENCE [LARGE SCALE MRNA] (ISOFORM 1)</scope>
    <source>
        <tissue>Brain</tissue>
        <tissue>Uterus</tissue>
    </source>
</reference>
<reference key="7">
    <citation type="journal article" date="2000" name="Proc. Natl. Acad. Sci. U.S.A.">
        <title>Shotgun sequencing of the human transcriptome with ORF expressed sequence tags.</title>
        <authorList>
            <person name="Dias Neto E."/>
            <person name="Correa R.G."/>
            <person name="Verjovski-Almeida S."/>
            <person name="Briones M.R.S."/>
            <person name="Nagai M.A."/>
            <person name="da Silva W. Jr."/>
            <person name="Zago M.A."/>
            <person name="Bordin S."/>
            <person name="Costa F.F."/>
            <person name="Goldman G.H."/>
            <person name="Carvalho A.F."/>
            <person name="Matsukuma A."/>
            <person name="Baia G.S."/>
            <person name="Simpson D.H."/>
            <person name="Brunstein A."/>
            <person name="de Oliveira P.S.L."/>
            <person name="Bucher P."/>
            <person name="Jongeneel C.V."/>
            <person name="O'Hare M.J."/>
            <person name="Soares F."/>
            <person name="Brentani R.R."/>
            <person name="Reis L.F.L."/>
            <person name="de Souza S.J."/>
            <person name="Simpson A.J.G."/>
        </authorList>
    </citation>
    <scope>NUCLEOTIDE SEQUENCE [LARGE SCALE MRNA] OF 91-305 (ISOFORM 2)</scope>
</reference>
<reference key="8">
    <citation type="journal article" date="2006" name="J. Biol. Chem.">
        <title>Dynamic and functional assembly of the AAA peroxins, Pex1p and Pex6p, and their membrane receptor Pex26p.</title>
        <authorList>
            <person name="Tamura S."/>
            <person name="Yasutake S."/>
            <person name="Matsumoto N."/>
            <person name="Fujiki Y."/>
        </authorList>
    </citation>
    <scope>FUNCTION</scope>
</reference>
<reference key="9">
    <citation type="journal article" date="2006" name="J. Cell Sci.">
        <title>Targeting of the tail-anchored peroxisomal membrane proteins PEX26 and PEX15 occurs through C-terminal PEX19-binding sites.</title>
        <authorList>
            <person name="Halbach A."/>
            <person name="Landgraf C."/>
            <person name="Lorenzen S."/>
            <person name="Rosenkranz K."/>
            <person name="Volkmer-Engert R."/>
            <person name="Erdmann R."/>
            <person name="Rottensteiner H."/>
        </authorList>
    </citation>
    <scope>FUNCTION</scope>
</reference>
<reference key="10">
    <citation type="journal article" date="2011" name="Traffic">
        <title>Recruiting mechanism of the AAA peroxins, Pex1p and Pex6p, to Pex26p on the peroxisomal membrane.</title>
        <authorList>
            <person name="Nashiro C."/>
            <person name="Kashiwagi A."/>
            <person name="Matsuzaki T."/>
            <person name="Tamura S."/>
            <person name="Fujiki Y."/>
        </authorList>
    </citation>
    <scope>FUNCTION</scope>
    <scope>INTERACTION WITH PEX6</scope>
</reference>
<reference key="11">
    <citation type="journal article" date="2006" name="J. Biol. Chem.">
        <title>Mutations in the peroxin Pex26p responsible for peroxisome biogenesis disorders of complementation group 8 impair its stability, peroxisomal localization, and interaction with the Pex1p x Pex6p complex.</title>
        <authorList>
            <person name="Furuki S."/>
            <person name="Tamura S."/>
            <person name="Matsumoto N."/>
            <person name="Miyata N."/>
            <person name="Moser A."/>
            <person name="Moser H.W."/>
            <person name="Fujiki Y."/>
        </authorList>
    </citation>
    <scope>VARIANTS PBD-CG8 PRO-44; TRP-98 AND LEU-117</scope>
    <scope>FUNCTION</scope>
    <scope>SUBCELLULAR LOCATION</scope>
    <scope>CHARACTERIZATION OF VARIANTS PBD-CG8 PRO-44; TRP-98 AND LEU-117</scope>
</reference>
<reference key="12">
    <citation type="journal article" date="2009" name="Hum. Mutat.">
        <title>Identification of novel mutations and sequence variation in the Zellweger syndrome spectrum of peroxisome biogenesis disorders.</title>
        <authorList>
            <person name="Yik W.Y."/>
            <person name="Steinberg S.J."/>
            <person name="Moser A.B."/>
            <person name="Moser H.W."/>
            <person name="Hacia J.G."/>
        </authorList>
    </citation>
    <scope>INVOLVEMENT IN PBD-CG8</scope>
    <scope>VARIANT PBD-CG8 TRP-98</scope>
    <scope>VARIANT VAL-153</scope>
</reference>
<reference key="13">
    <citation type="journal article" date="2012" name="Proc. Natl. Acad. Sci. U.S.A.">
        <title>N-terminal acetylome analyses and functional insights of the N-terminal acetyltransferase NatB.</title>
        <authorList>
            <person name="Van Damme P."/>
            <person name="Lasa M."/>
            <person name="Polevoda B."/>
            <person name="Gazquez C."/>
            <person name="Elosegui-Artola A."/>
            <person name="Kim D.S."/>
            <person name="De Juan-Pardo E."/>
            <person name="Demeyer K."/>
            <person name="Hole K."/>
            <person name="Larrea E."/>
            <person name="Timmerman E."/>
            <person name="Prieto J."/>
            <person name="Arnesen T."/>
            <person name="Sherman F."/>
            <person name="Gevaert K."/>
            <person name="Aldabe R."/>
        </authorList>
    </citation>
    <scope>IDENTIFICATION BY MASS SPECTROMETRY [LARGE SCALE ANALYSIS]</scope>
</reference>
<reference key="14">
    <citation type="journal article" date="2015" name="Proteomics">
        <title>N-terminome analysis of the human mitochondrial proteome.</title>
        <authorList>
            <person name="Vaca Jacome A.S."/>
            <person name="Rabilloud T."/>
            <person name="Schaeffer-Reiss C."/>
            <person name="Rompais M."/>
            <person name="Ayoub D."/>
            <person name="Lane L."/>
            <person name="Bairoch A."/>
            <person name="Van Dorsselaer A."/>
            <person name="Carapito C."/>
        </authorList>
    </citation>
    <scope>IDENTIFICATION BY MASS SPECTROMETRY [LARGE SCALE ANALYSIS]</scope>
</reference>
<reference key="15">
    <citation type="journal article" date="2021" name="Mol. Genet. Metab. Rep.">
        <title>A novel mutation in the PEX26 gene in a family from Dagestan with members affected by Zellweger spectrum disorder.</title>
        <authorList>
            <person name="Semenova N.A."/>
            <person name="Kurkina M.V."/>
            <person name="Marakhonov A.V."/>
            <person name="Dadali E.L."/>
            <person name="Taran N.N."/>
            <person name="Strokova T.V."/>
        </authorList>
    </citation>
    <scope>VARIANT PBD7A GLN-116</scope>
</reference>
<gene>
    <name evidence="12 15" type="primary">PEX26</name>
</gene>
<dbReference type="EMBL" id="AB089678">
    <property type="protein sequence ID" value="BAC66616.1"/>
    <property type="molecule type" value="mRNA"/>
</dbReference>
<dbReference type="EMBL" id="AB103106">
    <property type="protein sequence ID" value="BAC78804.1"/>
    <property type="molecule type" value="mRNA"/>
</dbReference>
<dbReference type="EMBL" id="AB103107">
    <property type="protein sequence ID" value="BAC78805.1"/>
    <property type="molecule type" value="mRNA"/>
</dbReference>
<dbReference type="EMBL" id="AB103108">
    <property type="protein sequence ID" value="BAC78806.1"/>
    <property type="molecule type" value="mRNA"/>
</dbReference>
<dbReference type="EMBL" id="AB103109">
    <property type="protein sequence ID" value="BAC78807.1"/>
    <property type="molecule type" value="mRNA"/>
</dbReference>
<dbReference type="EMBL" id="AB103110">
    <property type="protein sequence ID" value="BAC78808.1"/>
    <property type="molecule type" value="mRNA"/>
</dbReference>
<dbReference type="EMBL" id="AK000065">
    <property type="protein sequence ID" value="BAA90920.1"/>
    <property type="status" value="ALT_SEQ"/>
    <property type="molecule type" value="mRNA"/>
</dbReference>
<dbReference type="EMBL" id="AK000702">
    <property type="protein sequence ID" value="BAA91329.1"/>
    <property type="molecule type" value="mRNA"/>
</dbReference>
<dbReference type="EMBL" id="CR456362">
    <property type="protein sequence ID" value="CAG30248.1"/>
    <property type="molecule type" value="mRNA"/>
</dbReference>
<dbReference type="EMBL" id="AC008079">
    <property type="status" value="NOT_ANNOTATED_CDS"/>
    <property type="molecule type" value="Genomic_DNA"/>
</dbReference>
<dbReference type="EMBL" id="AC016027">
    <property type="status" value="NOT_ANNOTATED_CDS"/>
    <property type="molecule type" value="Genomic_DNA"/>
</dbReference>
<dbReference type="EMBL" id="BC016280">
    <property type="protein sequence ID" value="AAH16280.1"/>
    <property type="molecule type" value="mRNA"/>
</dbReference>
<dbReference type="EMBL" id="BC047320">
    <property type="protein sequence ID" value="AAH47320.1"/>
    <property type="molecule type" value="mRNA"/>
</dbReference>
<dbReference type="EMBL" id="BF930319">
    <property type="status" value="NOT_ANNOTATED_CDS"/>
    <property type="molecule type" value="mRNA"/>
</dbReference>
<dbReference type="CCDS" id="CCDS13750.1">
    <molecule id="Q7Z412-1"/>
</dbReference>
<dbReference type="CCDS" id="CCDS56221.1">
    <molecule id="Q7Z412-2"/>
</dbReference>
<dbReference type="RefSeq" id="NP_001121121.1">
    <molecule id="Q7Z412-1"/>
    <property type="nucleotide sequence ID" value="NM_001127649.3"/>
</dbReference>
<dbReference type="RefSeq" id="NP_001186248.1">
    <molecule id="Q7Z412-2"/>
    <property type="nucleotide sequence ID" value="NM_001199319.2"/>
</dbReference>
<dbReference type="RefSeq" id="NP_060399.1">
    <molecule id="Q7Z412-1"/>
    <property type="nucleotide sequence ID" value="NM_017929.6"/>
</dbReference>
<dbReference type="SMR" id="Q7Z412"/>
<dbReference type="BioGRID" id="120802">
    <property type="interactions" value="13"/>
</dbReference>
<dbReference type="ComplexPortal" id="CPX-8808">
    <property type="entry name" value="Peroxisomal receptor export module complex"/>
</dbReference>
<dbReference type="CORUM" id="Q7Z412"/>
<dbReference type="FunCoup" id="Q7Z412">
    <property type="interactions" value="531"/>
</dbReference>
<dbReference type="IntAct" id="Q7Z412">
    <property type="interactions" value="40"/>
</dbReference>
<dbReference type="MINT" id="Q7Z412"/>
<dbReference type="STRING" id="9606.ENSP00000331106"/>
<dbReference type="TCDB" id="3.A.20.1.1">
    <property type="family name" value="the peroxisomal protein importer (ppi) family"/>
</dbReference>
<dbReference type="iPTMnet" id="Q7Z412"/>
<dbReference type="PhosphoSitePlus" id="Q7Z412"/>
<dbReference type="BioMuta" id="PEX26"/>
<dbReference type="DMDM" id="47606028"/>
<dbReference type="jPOST" id="Q7Z412"/>
<dbReference type="MassIVE" id="Q7Z412"/>
<dbReference type="PaxDb" id="9606-ENSP00000331106"/>
<dbReference type="PeptideAtlas" id="Q7Z412"/>
<dbReference type="ProteomicsDB" id="28013"/>
<dbReference type="ProteomicsDB" id="69127">
    <molecule id="Q7Z412-1"/>
</dbReference>
<dbReference type="Pumba" id="Q7Z412"/>
<dbReference type="Antibodypedia" id="22750">
    <property type="antibodies" value="128 antibodies from 27 providers"/>
</dbReference>
<dbReference type="DNASU" id="55670"/>
<dbReference type="Ensembl" id="ENST00000329627.11">
    <molecule id="Q7Z412-1"/>
    <property type="protein sequence ID" value="ENSP00000331106.5"/>
    <property type="gene ID" value="ENSG00000215193.14"/>
</dbReference>
<dbReference type="Ensembl" id="ENST00000399744.8">
    <molecule id="Q7Z412-1"/>
    <property type="protein sequence ID" value="ENSP00000382648.4"/>
    <property type="gene ID" value="ENSG00000215193.14"/>
</dbReference>
<dbReference type="Ensembl" id="ENST00000428061.2">
    <molecule id="Q7Z412-2"/>
    <property type="protein sequence ID" value="ENSP00000412441.2"/>
    <property type="gene ID" value="ENSG00000215193.14"/>
</dbReference>
<dbReference type="GeneID" id="55670"/>
<dbReference type="KEGG" id="hsa:55670"/>
<dbReference type="MANE-Select" id="ENST00000399744.8">
    <property type="protein sequence ID" value="ENSP00000382648.4"/>
    <property type="RefSeq nucleotide sequence ID" value="NM_001127649.3"/>
    <property type="RefSeq protein sequence ID" value="NP_001121121.1"/>
</dbReference>
<dbReference type="UCSC" id="uc002znp.5">
    <molecule id="Q7Z412-1"/>
    <property type="organism name" value="human"/>
</dbReference>
<dbReference type="AGR" id="HGNC:22965"/>
<dbReference type="CTD" id="55670"/>
<dbReference type="DisGeNET" id="55670"/>
<dbReference type="GeneCards" id="PEX26"/>
<dbReference type="GeneReviews" id="PEX26"/>
<dbReference type="HGNC" id="HGNC:22965">
    <property type="gene designation" value="PEX26"/>
</dbReference>
<dbReference type="HPA" id="ENSG00000215193">
    <property type="expression patterns" value="Low tissue specificity"/>
</dbReference>
<dbReference type="MalaCards" id="PEX26"/>
<dbReference type="MIM" id="608666">
    <property type="type" value="gene"/>
</dbReference>
<dbReference type="MIM" id="614872">
    <property type="type" value="phenotype"/>
</dbReference>
<dbReference type="MIM" id="614873">
    <property type="type" value="phenotype"/>
</dbReference>
<dbReference type="neXtProt" id="NX_Q7Z412"/>
<dbReference type="OpenTargets" id="ENSG00000215193"/>
<dbReference type="Orphanet" id="772">
    <property type="disease" value="Infantile Refsum disease"/>
</dbReference>
<dbReference type="Orphanet" id="44">
    <property type="disease" value="Neonatal adrenoleukodystrophy"/>
</dbReference>
<dbReference type="Orphanet" id="912">
    <property type="disease" value="Zellweger syndrome"/>
</dbReference>
<dbReference type="PharmGKB" id="PA134983458"/>
<dbReference type="VEuPathDB" id="HostDB:ENSG00000215193"/>
<dbReference type="eggNOG" id="ENOG502RXMN">
    <property type="taxonomic scope" value="Eukaryota"/>
</dbReference>
<dbReference type="GeneTree" id="ENSGT00510000049725"/>
<dbReference type="HOGENOM" id="CLU_051194_0_0_1"/>
<dbReference type="InParanoid" id="Q7Z412"/>
<dbReference type="OMA" id="QTCERAW"/>
<dbReference type="OrthoDB" id="5954192at2759"/>
<dbReference type="PAN-GO" id="Q7Z412">
    <property type="GO annotations" value="3 GO annotations based on evolutionary models"/>
</dbReference>
<dbReference type="PhylomeDB" id="Q7Z412"/>
<dbReference type="TreeFam" id="TF332318"/>
<dbReference type="PathwayCommons" id="Q7Z412"/>
<dbReference type="Reactome" id="R-HSA-9033241">
    <property type="pathway name" value="Peroxisomal protein import"/>
</dbReference>
<dbReference type="Reactome" id="R-HSA-9603798">
    <property type="pathway name" value="Class I peroxisomal membrane protein import"/>
</dbReference>
<dbReference type="SignaLink" id="Q7Z412"/>
<dbReference type="SIGNOR" id="Q7Z412"/>
<dbReference type="BioGRID-ORCS" id="55670">
    <property type="hits" value="82 hits in 1160 CRISPR screens"/>
</dbReference>
<dbReference type="ChiTaRS" id="PEX26">
    <property type="organism name" value="human"/>
</dbReference>
<dbReference type="GeneWiki" id="PEX26"/>
<dbReference type="GenomeRNAi" id="55670"/>
<dbReference type="Pharos" id="Q7Z412">
    <property type="development level" value="Tbio"/>
</dbReference>
<dbReference type="PRO" id="PR:Q7Z412"/>
<dbReference type="Proteomes" id="UP000005640">
    <property type="component" value="Chromosome 22"/>
</dbReference>
<dbReference type="RNAct" id="Q7Z412">
    <property type="molecule type" value="protein"/>
</dbReference>
<dbReference type="Bgee" id="ENSG00000215193">
    <property type="expression patterns" value="Expressed in mucosa of transverse colon and 184 other cell types or tissues"/>
</dbReference>
<dbReference type="ExpressionAtlas" id="Q7Z412">
    <property type="expression patterns" value="baseline and differential"/>
</dbReference>
<dbReference type="GO" id="GO:0005829">
    <property type="term" value="C:cytosol"/>
    <property type="evidence" value="ECO:0000304"/>
    <property type="project" value="Reactome"/>
</dbReference>
<dbReference type="GO" id="GO:0005778">
    <property type="term" value="C:peroxisomal membrane"/>
    <property type="evidence" value="ECO:0000314"/>
    <property type="project" value="UniProtKB"/>
</dbReference>
<dbReference type="GO" id="GO:0005777">
    <property type="term" value="C:peroxisome"/>
    <property type="evidence" value="ECO:0000314"/>
    <property type="project" value="UniProtKB"/>
</dbReference>
<dbReference type="GO" id="GO:0051117">
    <property type="term" value="F:ATPase binding"/>
    <property type="evidence" value="ECO:0000353"/>
    <property type="project" value="UniProtKB"/>
</dbReference>
<dbReference type="GO" id="GO:0044877">
    <property type="term" value="F:protein-containing complex binding"/>
    <property type="evidence" value="ECO:0000314"/>
    <property type="project" value="UniProtKB"/>
</dbReference>
<dbReference type="GO" id="GO:0043495">
    <property type="term" value="F:protein-membrane adaptor activity"/>
    <property type="evidence" value="ECO:0000314"/>
    <property type="project" value="UniProtKB"/>
</dbReference>
<dbReference type="GO" id="GO:0016558">
    <property type="term" value="P:protein import into peroxisome matrix"/>
    <property type="evidence" value="ECO:0000314"/>
    <property type="project" value="UniProtKB"/>
</dbReference>
<dbReference type="GO" id="GO:0045046">
    <property type="term" value="P:protein import into peroxisome membrane"/>
    <property type="evidence" value="ECO:0007669"/>
    <property type="project" value="InterPro"/>
</dbReference>
<dbReference type="GO" id="GO:0022615">
    <property type="term" value="P:protein to membrane docking"/>
    <property type="evidence" value="ECO:0000314"/>
    <property type="project" value="UniProtKB"/>
</dbReference>
<dbReference type="InterPro" id="IPR010797">
    <property type="entry name" value="Pex26"/>
</dbReference>
<dbReference type="PANTHER" id="PTHR16262">
    <property type="entry name" value="PEROXISOME ASSEMBLY PROTEIN 26"/>
    <property type="match status" value="1"/>
</dbReference>
<dbReference type="PANTHER" id="PTHR16262:SF2">
    <property type="entry name" value="PEROXISOME ASSEMBLY PROTEIN 26"/>
    <property type="match status" value="1"/>
</dbReference>
<dbReference type="Pfam" id="PF07163">
    <property type="entry name" value="Pex26"/>
    <property type="match status" value="1"/>
</dbReference>
<organism>
    <name type="scientific">Homo sapiens</name>
    <name type="common">Human</name>
    <dbReference type="NCBI Taxonomy" id="9606"/>
    <lineage>
        <taxon>Eukaryota</taxon>
        <taxon>Metazoa</taxon>
        <taxon>Chordata</taxon>
        <taxon>Craniata</taxon>
        <taxon>Vertebrata</taxon>
        <taxon>Euteleostomi</taxon>
        <taxon>Mammalia</taxon>
        <taxon>Eutheria</taxon>
        <taxon>Euarchontoglires</taxon>
        <taxon>Primates</taxon>
        <taxon>Haplorrhini</taxon>
        <taxon>Catarrhini</taxon>
        <taxon>Hominidae</taxon>
        <taxon>Homo</taxon>
    </lineage>
</organism>